<comment type="function">
    <text evidence="1">IF-3 binds to the 30S ribosomal subunit and shifts the equilibrium between 70S ribosomes and their 50S and 30S subunits in favor of the free subunits, thus enhancing the availability of 30S subunits on which protein synthesis initiation begins.</text>
</comment>
<comment type="subunit">
    <text evidence="1">Monomer.</text>
</comment>
<comment type="subcellular location">
    <subcellularLocation>
        <location evidence="1">Cytoplasm</location>
    </subcellularLocation>
</comment>
<comment type="similarity">
    <text evidence="1">Belongs to the IF-3 family.</text>
</comment>
<name>IF3_LACJO</name>
<evidence type="ECO:0000255" key="1">
    <source>
        <dbReference type="HAMAP-Rule" id="MF_00080"/>
    </source>
</evidence>
<accession>Q74IC4</accession>
<proteinExistence type="inferred from homology"/>
<organism>
    <name type="scientific">Lactobacillus johnsonii (strain CNCM I-12250 / La1 / NCC 533)</name>
    <dbReference type="NCBI Taxonomy" id="257314"/>
    <lineage>
        <taxon>Bacteria</taxon>
        <taxon>Bacillati</taxon>
        <taxon>Bacillota</taxon>
        <taxon>Bacilli</taxon>
        <taxon>Lactobacillales</taxon>
        <taxon>Lactobacillaceae</taxon>
        <taxon>Lactobacillus</taxon>
    </lineage>
</organism>
<keyword id="KW-0963">Cytoplasm</keyword>
<keyword id="KW-0396">Initiation factor</keyword>
<keyword id="KW-0648">Protein biosynthesis</keyword>
<reference key="1">
    <citation type="journal article" date="2004" name="Proc. Natl. Acad. Sci. U.S.A.">
        <title>The genome sequence of the probiotic intestinal bacterium Lactobacillus johnsonii NCC 533.</title>
        <authorList>
            <person name="Pridmore R.D."/>
            <person name="Berger B."/>
            <person name="Desiere F."/>
            <person name="Vilanova D."/>
            <person name="Barretto C."/>
            <person name="Pittet A.-C."/>
            <person name="Zwahlen M.-C."/>
            <person name="Rouvet M."/>
            <person name="Altermann E."/>
            <person name="Barrangou R."/>
            <person name="Mollet B."/>
            <person name="Mercenier A."/>
            <person name="Klaenhammer T."/>
            <person name="Arigoni F."/>
            <person name="Schell M.A."/>
        </authorList>
    </citation>
    <scope>NUCLEOTIDE SEQUENCE [LARGE SCALE GENOMIC DNA]</scope>
    <source>
        <strain>CNCM I-1225 / La1 / NCC 533</strain>
    </source>
</reference>
<feature type="chain" id="PRO_0000177529" description="Translation initiation factor IF-3">
    <location>
        <begin position="1"/>
        <end position="172"/>
    </location>
</feature>
<sequence>MILNEDIRAREVRLIGVDGQQVGVVSKNEALRKAADADLDLVLLSPNAKPPVARIMDYGKFRFEQQKKAKENRKNQKVMAVKEIRLSPTIEGNDFDTKLKHVRKFLTKGAKVRVSIRFRGRAITHKELGKQVLEKMADEASDLSNVVTKPKMEGRSMFLMLAPLSEKDKKKK</sequence>
<protein>
    <recommendedName>
        <fullName evidence="1">Translation initiation factor IF-3</fullName>
    </recommendedName>
</protein>
<gene>
    <name evidence="1" type="primary">infC</name>
    <name type="ordered locus">LJ_1641</name>
</gene>
<dbReference type="EMBL" id="AE017198">
    <property type="protein sequence ID" value="AAS09414.1"/>
    <property type="molecule type" value="Genomic_DNA"/>
</dbReference>
<dbReference type="RefSeq" id="WP_004893676.1">
    <property type="nucleotide sequence ID" value="NC_005362.1"/>
</dbReference>
<dbReference type="SMR" id="Q74IC4"/>
<dbReference type="GeneID" id="83570839"/>
<dbReference type="KEGG" id="ljo:LJ_1641"/>
<dbReference type="eggNOG" id="COG0290">
    <property type="taxonomic scope" value="Bacteria"/>
</dbReference>
<dbReference type="HOGENOM" id="CLU_054919_3_2_9"/>
<dbReference type="Proteomes" id="UP000000581">
    <property type="component" value="Chromosome"/>
</dbReference>
<dbReference type="GO" id="GO:0005829">
    <property type="term" value="C:cytosol"/>
    <property type="evidence" value="ECO:0007669"/>
    <property type="project" value="TreeGrafter"/>
</dbReference>
<dbReference type="GO" id="GO:0016020">
    <property type="term" value="C:membrane"/>
    <property type="evidence" value="ECO:0007669"/>
    <property type="project" value="TreeGrafter"/>
</dbReference>
<dbReference type="GO" id="GO:0043022">
    <property type="term" value="F:ribosome binding"/>
    <property type="evidence" value="ECO:0007669"/>
    <property type="project" value="TreeGrafter"/>
</dbReference>
<dbReference type="GO" id="GO:0003743">
    <property type="term" value="F:translation initiation factor activity"/>
    <property type="evidence" value="ECO:0007669"/>
    <property type="project" value="UniProtKB-UniRule"/>
</dbReference>
<dbReference type="GO" id="GO:0032790">
    <property type="term" value="P:ribosome disassembly"/>
    <property type="evidence" value="ECO:0007669"/>
    <property type="project" value="TreeGrafter"/>
</dbReference>
<dbReference type="FunFam" id="3.10.20.80:FF:000001">
    <property type="entry name" value="Translation initiation factor IF-3"/>
    <property type="match status" value="1"/>
</dbReference>
<dbReference type="FunFam" id="3.30.110.10:FF:000001">
    <property type="entry name" value="Translation initiation factor IF-3"/>
    <property type="match status" value="1"/>
</dbReference>
<dbReference type="Gene3D" id="3.30.110.10">
    <property type="entry name" value="Translation initiation factor 3 (IF-3), C-terminal domain"/>
    <property type="match status" value="1"/>
</dbReference>
<dbReference type="Gene3D" id="3.10.20.80">
    <property type="entry name" value="Translation initiation factor 3 (IF-3), N-terminal domain"/>
    <property type="match status" value="1"/>
</dbReference>
<dbReference type="HAMAP" id="MF_00080">
    <property type="entry name" value="IF_3"/>
    <property type="match status" value="1"/>
</dbReference>
<dbReference type="InterPro" id="IPR036788">
    <property type="entry name" value="T_IF-3_C_sf"/>
</dbReference>
<dbReference type="InterPro" id="IPR036787">
    <property type="entry name" value="T_IF-3_N_sf"/>
</dbReference>
<dbReference type="InterPro" id="IPR019813">
    <property type="entry name" value="Translation_initiation_fac3_CS"/>
</dbReference>
<dbReference type="InterPro" id="IPR001288">
    <property type="entry name" value="Translation_initiation_fac_3"/>
</dbReference>
<dbReference type="InterPro" id="IPR019815">
    <property type="entry name" value="Translation_initiation_fac_3_C"/>
</dbReference>
<dbReference type="InterPro" id="IPR019814">
    <property type="entry name" value="Translation_initiation_fac_3_N"/>
</dbReference>
<dbReference type="NCBIfam" id="TIGR00168">
    <property type="entry name" value="infC"/>
    <property type="match status" value="1"/>
</dbReference>
<dbReference type="PANTHER" id="PTHR10938">
    <property type="entry name" value="TRANSLATION INITIATION FACTOR IF-3"/>
    <property type="match status" value="1"/>
</dbReference>
<dbReference type="PANTHER" id="PTHR10938:SF0">
    <property type="entry name" value="TRANSLATION INITIATION FACTOR IF-3, MITOCHONDRIAL"/>
    <property type="match status" value="1"/>
</dbReference>
<dbReference type="Pfam" id="PF00707">
    <property type="entry name" value="IF3_C"/>
    <property type="match status" value="1"/>
</dbReference>
<dbReference type="Pfam" id="PF05198">
    <property type="entry name" value="IF3_N"/>
    <property type="match status" value="1"/>
</dbReference>
<dbReference type="SUPFAM" id="SSF55200">
    <property type="entry name" value="Translation initiation factor IF3, C-terminal domain"/>
    <property type="match status" value="1"/>
</dbReference>
<dbReference type="SUPFAM" id="SSF54364">
    <property type="entry name" value="Translation initiation factor IF3, N-terminal domain"/>
    <property type="match status" value="1"/>
</dbReference>
<dbReference type="PROSITE" id="PS00938">
    <property type="entry name" value="IF3"/>
    <property type="match status" value="1"/>
</dbReference>